<dbReference type="EMBL" id="CP001013">
    <property type="protein sequence ID" value="ACB36447.1"/>
    <property type="molecule type" value="Genomic_DNA"/>
</dbReference>
<dbReference type="RefSeq" id="WP_012349188.1">
    <property type="nucleotide sequence ID" value="NC_010524.1"/>
</dbReference>
<dbReference type="SMR" id="B1XYL1"/>
<dbReference type="STRING" id="395495.Lcho_4196"/>
<dbReference type="KEGG" id="lch:Lcho_4196"/>
<dbReference type="eggNOG" id="COG0445">
    <property type="taxonomic scope" value="Bacteria"/>
</dbReference>
<dbReference type="HOGENOM" id="CLU_007831_2_2_4"/>
<dbReference type="OrthoDB" id="9815560at2"/>
<dbReference type="Proteomes" id="UP000001693">
    <property type="component" value="Chromosome"/>
</dbReference>
<dbReference type="GO" id="GO:0005829">
    <property type="term" value="C:cytosol"/>
    <property type="evidence" value="ECO:0007669"/>
    <property type="project" value="TreeGrafter"/>
</dbReference>
<dbReference type="GO" id="GO:0050660">
    <property type="term" value="F:flavin adenine dinucleotide binding"/>
    <property type="evidence" value="ECO:0007669"/>
    <property type="project" value="UniProtKB-UniRule"/>
</dbReference>
<dbReference type="GO" id="GO:0030488">
    <property type="term" value="P:tRNA methylation"/>
    <property type="evidence" value="ECO:0007669"/>
    <property type="project" value="TreeGrafter"/>
</dbReference>
<dbReference type="GO" id="GO:0002098">
    <property type="term" value="P:tRNA wobble uridine modification"/>
    <property type="evidence" value="ECO:0007669"/>
    <property type="project" value="InterPro"/>
</dbReference>
<dbReference type="FunFam" id="1.10.150.570:FF:000001">
    <property type="entry name" value="tRNA uridine 5-carboxymethylaminomethyl modification enzyme MnmG"/>
    <property type="match status" value="1"/>
</dbReference>
<dbReference type="FunFam" id="3.50.50.60:FF:000002">
    <property type="entry name" value="tRNA uridine 5-carboxymethylaminomethyl modification enzyme MnmG"/>
    <property type="match status" value="1"/>
</dbReference>
<dbReference type="FunFam" id="3.50.50.60:FF:000010">
    <property type="entry name" value="tRNA uridine 5-carboxymethylaminomethyl modification enzyme MnmG"/>
    <property type="match status" value="1"/>
</dbReference>
<dbReference type="Gene3D" id="3.50.50.60">
    <property type="entry name" value="FAD/NAD(P)-binding domain"/>
    <property type="match status" value="2"/>
</dbReference>
<dbReference type="Gene3D" id="1.10.150.570">
    <property type="entry name" value="GidA associated domain, C-terminal subdomain"/>
    <property type="match status" value="1"/>
</dbReference>
<dbReference type="Gene3D" id="1.10.10.1800">
    <property type="entry name" value="tRNA uridine 5-carboxymethylaminomethyl modification enzyme MnmG/GidA"/>
    <property type="match status" value="1"/>
</dbReference>
<dbReference type="HAMAP" id="MF_00129">
    <property type="entry name" value="MnmG_GidA"/>
    <property type="match status" value="1"/>
</dbReference>
<dbReference type="InterPro" id="IPR036188">
    <property type="entry name" value="FAD/NAD-bd_sf"/>
</dbReference>
<dbReference type="InterPro" id="IPR049312">
    <property type="entry name" value="GIDA_C_N"/>
</dbReference>
<dbReference type="InterPro" id="IPR004416">
    <property type="entry name" value="MnmG"/>
</dbReference>
<dbReference type="InterPro" id="IPR002218">
    <property type="entry name" value="MnmG-rel"/>
</dbReference>
<dbReference type="InterPro" id="IPR020595">
    <property type="entry name" value="MnmG-rel_CS"/>
</dbReference>
<dbReference type="InterPro" id="IPR026904">
    <property type="entry name" value="MnmG_C"/>
</dbReference>
<dbReference type="InterPro" id="IPR047001">
    <property type="entry name" value="MnmG_C_subdom"/>
</dbReference>
<dbReference type="InterPro" id="IPR044920">
    <property type="entry name" value="MnmG_C_subdom_sf"/>
</dbReference>
<dbReference type="InterPro" id="IPR040131">
    <property type="entry name" value="MnmG_N"/>
</dbReference>
<dbReference type="NCBIfam" id="TIGR00136">
    <property type="entry name" value="mnmG_gidA"/>
    <property type="match status" value="1"/>
</dbReference>
<dbReference type="PANTHER" id="PTHR11806">
    <property type="entry name" value="GLUCOSE INHIBITED DIVISION PROTEIN A"/>
    <property type="match status" value="1"/>
</dbReference>
<dbReference type="PANTHER" id="PTHR11806:SF0">
    <property type="entry name" value="PROTEIN MTO1 HOMOLOG, MITOCHONDRIAL"/>
    <property type="match status" value="1"/>
</dbReference>
<dbReference type="Pfam" id="PF01134">
    <property type="entry name" value="GIDA"/>
    <property type="match status" value="1"/>
</dbReference>
<dbReference type="Pfam" id="PF21680">
    <property type="entry name" value="GIDA_C_1st"/>
    <property type="match status" value="1"/>
</dbReference>
<dbReference type="Pfam" id="PF13932">
    <property type="entry name" value="SAM_GIDA_C"/>
    <property type="match status" value="1"/>
</dbReference>
<dbReference type="SMART" id="SM01228">
    <property type="entry name" value="GIDA_assoc_3"/>
    <property type="match status" value="1"/>
</dbReference>
<dbReference type="SUPFAM" id="SSF51905">
    <property type="entry name" value="FAD/NAD(P)-binding domain"/>
    <property type="match status" value="1"/>
</dbReference>
<dbReference type="PROSITE" id="PS01280">
    <property type="entry name" value="GIDA_1"/>
    <property type="match status" value="1"/>
</dbReference>
<protein>
    <recommendedName>
        <fullName evidence="1">tRNA uridine 5-carboxymethylaminomethyl modification enzyme MnmG</fullName>
    </recommendedName>
    <alternativeName>
        <fullName evidence="1">Glucose-inhibited division protein A</fullName>
    </alternativeName>
</protein>
<keyword id="KW-0963">Cytoplasm</keyword>
<keyword id="KW-0274">FAD</keyword>
<keyword id="KW-0285">Flavoprotein</keyword>
<keyword id="KW-0520">NAD</keyword>
<keyword id="KW-1185">Reference proteome</keyword>
<keyword id="KW-0819">tRNA processing</keyword>
<proteinExistence type="inferred from homology"/>
<comment type="function">
    <text evidence="1">NAD-binding protein involved in the addition of a carboxymethylaminomethyl (cmnm) group at the wobble position (U34) of certain tRNAs, forming tRNA-cmnm(5)s(2)U34.</text>
</comment>
<comment type="cofactor">
    <cofactor evidence="1">
        <name>FAD</name>
        <dbReference type="ChEBI" id="CHEBI:57692"/>
    </cofactor>
</comment>
<comment type="subunit">
    <text evidence="1">Homodimer. Heterotetramer of two MnmE and two MnmG subunits.</text>
</comment>
<comment type="subcellular location">
    <subcellularLocation>
        <location evidence="1">Cytoplasm</location>
    </subcellularLocation>
</comment>
<comment type="similarity">
    <text evidence="1">Belongs to the MnmG family.</text>
</comment>
<organism>
    <name type="scientific">Leptothrix cholodnii (strain ATCC 51168 / LMG 8142 / SP-6)</name>
    <name type="common">Leptothrix discophora (strain SP-6)</name>
    <dbReference type="NCBI Taxonomy" id="395495"/>
    <lineage>
        <taxon>Bacteria</taxon>
        <taxon>Pseudomonadati</taxon>
        <taxon>Pseudomonadota</taxon>
        <taxon>Betaproteobacteria</taxon>
        <taxon>Burkholderiales</taxon>
        <taxon>Sphaerotilaceae</taxon>
        <taxon>Leptothrix</taxon>
    </lineage>
</organism>
<name>MNMG_LEPCP</name>
<accession>B1XYL1</accession>
<evidence type="ECO:0000255" key="1">
    <source>
        <dbReference type="HAMAP-Rule" id="MF_00129"/>
    </source>
</evidence>
<sequence length="685" mass="74573">MLYPQEFDVIVVGGGHAGTEAALAAARMGCDTLLLTHNIETLGQMSCNPSIGGIGKGHLVKEVDALGGAMAAATDESGIQFRILNSSKGPAVRATRAQADRILYKAAIRQRLENQPHLWLFQQAVDDLMVEGDRVVGAVTQVGIRFRARTVVLTAGTFLDGKIHVGLNNYPAGRAGDPPAVSLSARLKELKLPQGRLKTGTPPRIDGRSIDFSKLIEQPGDGVAAADGTPASSPMPVFSFLGSAAQHPRQMPCWITNTNQRTHDILRTGFDRSPMFTGVIEGVGPRYCPSIEDKINRFADKNSHQIFLEPEGLTTNEYYPNGISTSLPFDIQLAAVRTMLGMENAYILRPGYAIEYDYFDPRELKTSFESKAIGGLFFAGQINGTTGYEEAAAQGLYAGANAALQAQGNPPLSFGRDQAYLGVLVDDLITKGVTEPYRMFTSRAEFRLQLREDNADMRLTEIGRSVGLVDDVRWDAFNRKRDAVSRETERLKSTWVHPAILPAADSERLFGKALEHEYNLADLMRRPGISYDTVAEALTIARPGNYVSRETLNSQLGADLAAAVIEQLEIAIKYAGYIDKQNEDVQRAAHYEHLRLPDELDYAQVTALSFEVRQKLTKHRPETLGQASRISGVTPAALSLLLIHLKRGRFKGFTGNDKVAAGPISADAVNTDINDNPAHAATDAA</sequence>
<gene>
    <name evidence="1" type="primary">mnmG</name>
    <name evidence="1" type="synonym">gidA</name>
    <name type="ordered locus">Lcho_4196</name>
</gene>
<feature type="chain" id="PRO_0000345292" description="tRNA uridine 5-carboxymethylaminomethyl modification enzyme MnmG">
    <location>
        <begin position="1"/>
        <end position="685"/>
    </location>
</feature>
<feature type="binding site" evidence="1">
    <location>
        <begin position="13"/>
        <end position="18"/>
    </location>
    <ligand>
        <name>FAD</name>
        <dbReference type="ChEBI" id="CHEBI:57692"/>
    </ligand>
</feature>
<feature type="binding site" evidence="1">
    <location>
        <begin position="284"/>
        <end position="298"/>
    </location>
    <ligand>
        <name>NAD(+)</name>
        <dbReference type="ChEBI" id="CHEBI:57540"/>
    </ligand>
</feature>
<reference key="1">
    <citation type="submission" date="2008-03" db="EMBL/GenBank/DDBJ databases">
        <title>Complete sequence of Leptothrix cholodnii SP-6.</title>
        <authorList>
            <consortium name="US DOE Joint Genome Institute"/>
            <person name="Copeland A."/>
            <person name="Lucas S."/>
            <person name="Lapidus A."/>
            <person name="Glavina del Rio T."/>
            <person name="Dalin E."/>
            <person name="Tice H."/>
            <person name="Bruce D."/>
            <person name="Goodwin L."/>
            <person name="Pitluck S."/>
            <person name="Chertkov O."/>
            <person name="Brettin T."/>
            <person name="Detter J.C."/>
            <person name="Han C."/>
            <person name="Kuske C.R."/>
            <person name="Schmutz J."/>
            <person name="Larimer F."/>
            <person name="Land M."/>
            <person name="Hauser L."/>
            <person name="Kyrpides N."/>
            <person name="Lykidis A."/>
            <person name="Emerson D."/>
            <person name="Richardson P."/>
        </authorList>
    </citation>
    <scope>NUCLEOTIDE SEQUENCE [LARGE SCALE GENOMIC DNA]</scope>
    <source>
        <strain>ATCC 51168 / LMG 8142 / SP-6</strain>
    </source>
</reference>